<keyword id="KW-0333">Golgi apparatus</keyword>
<keyword id="KW-0472">Membrane</keyword>
<keyword id="KW-1185">Reference proteome</keyword>
<keyword id="KW-0812">Transmembrane</keyword>
<keyword id="KW-1133">Transmembrane helix</keyword>
<evidence type="ECO:0000255" key="1"/>
<evidence type="ECO:0000269" key="2">
    <source>
    </source>
</evidence>
<evidence type="ECO:0000305" key="3"/>
<proteinExistence type="inferred from homology"/>
<organism>
    <name type="scientific">Schizosaccharomyces pombe (strain 972 / ATCC 24843)</name>
    <name type="common">Fission yeast</name>
    <dbReference type="NCBI Taxonomy" id="284812"/>
    <lineage>
        <taxon>Eukaryota</taxon>
        <taxon>Fungi</taxon>
        <taxon>Dikarya</taxon>
        <taxon>Ascomycota</taxon>
        <taxon>Taphrinomycotina</taxon>
        <taxon>Schizosaccharomycetes</taxon>
        <taxon>Schizosaccharomycetales</taxon>
        <taxon>Schizosaccharomycetaceae</taxon>
        <taxon>Schizosaccharomyces</taxon>
    </lineage>
</organism>
<name>YHD5_SCHPO</name>
<protein>
    <recommendedName>
        <fullName>Uncharacterized permease C1683.05</fullName>
    </recommendedName>
</protein>
<sequence length="559" mass="62672">MEDPKSDEKFDIGISEKNLDVGFGESSSVDVPVKGRFASFLKKLELSSGPEKENIDLRPTPPDRRHYSALDIIYLWSCNGISASAFRTGTSYMEMGLSPKQALAALIAGNVFIAMPMTLNGLFGSHYHIPFAVQSRASFGYYFNTLIILLRFIAGLFYYGTNVYTGAECVQTILYAIFKSFRSYKNRLPADAGITSDFLISYFVYWVISFPFHLIRPEYLQRFFLIKSISTYIACFAMLIFLLCNVGSHVVWDQPATVSGRSWSWVFMCALNSSVAGFSTLAVNVNDFTRYVKHPKTPYVQMLILPLVAAVSAPIGIVSGVASKIMYGTAMWDPLQIANNWTSRGGRAAAFFMGLTYLVSMIAQNISDNTVAAANDLLYFFPRYLDIRRAQVIVIIIGAWAIVPWKILQNGTAFLAFLGSLSIFLGPAAGIFVADKFKNHHKYDIDEFYNPSGIYRYNKLGLNWRALIAFLCACVPLIPGMAMSINPSITMPDGVIHLYYIGYFYSFMTAFLIYWGLNLVFPAKETLLEEAVYPPKSNAELVDPSTLSGKDKFWYYIDY</sequence>
<accession>Q9P6J5</accession>
<reference key="1">
    <citation type="journal article" date="2002" name="Nature">
        <title>The genome sequence of Schizosaccharomyces pombe.</title>
        <authorList>
            <person name="Wood V."/>
            <person name="Gwilliam R."/>
            <person name="Rajandream M.A."/>
            <person name="Lyne M.H."/>
            <person name="Lyne R."/>
            <person name="Stewart A."/>
            <person name="Sgouros J.G."/>
            <person name="Peat N."/>
            <person name="Hayles J."/>
            <person name="Baker S.G."/>
            <person name="Basham D."/>
            <person name="Bowman S."/>
            <person name="Brooks K."/>
            <person name="Brown D."/>
            <person name="Brown S."/>
            <person name="Chillingworth T."/>
            <person name="Churcher C.M."/>
            <person name="Collins M."/>
            <person name="Connor R."/>
            <person name="Cronin A."/>
            <person name="Davis P."/>
            <person name="Feltwell T."/>
            <person name="Fraser A."/>
            <person name="Gentles S."/>
            <person name="Goble A."/>
            <person name="Hamlin N."/>
            <person name="Harris D.E."/>
            <person name="Hidalgo J."/>
            <person name="Hodgson G."/>
            <person name="Holroyd S."/>
            <person name="Hornsby T."/>
            <person name="Howarth S."/>
            <person name="Huckle E.J."/>
            <person name="Hunt S."/>
            <person name="Jagels K."/>
            <person name="James K.D."/>
            <person name="Jones L."/>
            <person name="Jones M."/>
            <person name="Leather S."/>
            <person name="McDonald S."/>
            <person name="McLean J."/>
            <person name="Mooney P."/>
            <person name="Moule S."/>
            <person name="Mungall K.L."/>
            <person name="Murphy L.D."/>
            <person name="Niblett D."/>
            <person name="Odell C."/>
            <person name="Oliver K."/>
            <person name="O'Neil S."/>
            <person name="Pearson D."/>
            <person name="Quail M.A."/>
            <person name="Rabbinowitsch E."/>
            <person name="Rutherford K.M."/>
            <person name="Rutter S."/>
            <person name="Saunders D."/>
            <person name="Seeger K."/>
            <person name="Sharp S."/>
            <person name="Skelton J."/>
            <person name="Simmonds M.N."/>
            <person name="Squares R."/>
            <person name="Squares S."/>
            <person name="Stevens K."/>
            <person name="Taylor K."/>
            <person name="Taylor R.G."/>
            <person name="Tivey A."/>
            <person name="Walsh S.V."/>
            <person name="Warren T."/>
            <person name="Whitehead S."/>
            <person name="Woodward J.R."/>
            <person name="Volckaert G."/>
            <person name="Aert R."/>
            <person name="Robben J."/>
            <person name="Grymonprez B."/>
            <person name="Weltjens I."/>
            <person name="Vanstreels E."/>
            <person name="Rieger M."/>
            <person name="Schaefer M."/>
            <person name="Mueller-Auer S."/>
            <person name="Gabel C."/>
            <person name="Fuchs M."/>
            <person name="Duesterhoeft A."/>
            <person name="Fritzc C."/>
            <person name="Holzer E."/>
            <person name="Moestl D."/>
            <person name="Hilbert H."/>
            <person name="Borzym K."/>
            <person name="Langer I."/>
            <person name="Beck A."/>
            <person name="Lehrach H."/>
            <person name="Reinhardt R."/>
            <person name="Pohl T.M."/>
            <person name="Eger P."/>
            <person name="Zimmermann W."/>
            <person name="Wedler H."/>
            <person name="Wambutt R."/>
            <person name="Purnelle B."/>
            <person name="Goffeau A."/>
            <person name="Cadieu E."/>
            <person name="Dreano S."/>
            <person name="Gloux S."/>
            <person name="Lelaure V."/>
            <person name="Mottier S."/>
            <person name="Galibert F."/>
            <person name="Aves S.J."/>
            <person name="Xiang Z."/>
            <person name="Hunt C."/>
            <person name="Moore K."/>
            <person name="Hurst S.M."/>
            <person name="Lucas M."/>
            <person name="Rochet M."/>
            <person name="Gaillardin C."/>
            <person name="Tallada V.A."/>
            <person name="Garzon A."/>
            <person name="Thode G."/>
            <person name="Daga R.R."/>
            <person name="Cruzado L."/>
            <person name="Jimenez J."/>
            <person name="Sanchez M."/>
            <person name="del Rey F."/>
            <person name="Benito J."/>
            <person name="Dominguez A."/>
            <person name="Revuelta J.L."/>
            <person name="Moreno S."/>
            <person name="Armstrong J."/>
            <person name="Forsburg S.L."/>
            <person name="Cerutti L."/>
            <person name="Lowe T."/>
            <person name="McCombie W.R."/>
            <person name="Paulsen I."/>
            <person name="Potashkin J."/>
            <person name="Shpakovski G.V."/>
            <person name="Ussery D."/>
            <person name="Barrell B.G."/>
            <person name="Nurse P."/>
        </authorList>
    </citation>
    <scope>NUCLEOTIDE SEQUENCE [LARGE SCALE GENOMIC DNA]</scope>
    <source>
        <strain>972 / ATCC 24843</strain>
    </source>
</reference>
<reference key="2">
    <citation type="journal article" date="2006" name="Nat. Biotechnol.">
        <title>ORFeome cloning and global analysis of protein localization in the fission yeast Schizosaccharomyces pombe.</title>
        <authorList>
            <person name="Matsuyama A."/>
            <person name="Arai R."/>
            <person name="Yashiroda Y."/>
            <person name="Shirai A."/>
            <person name="Kamata A."/>
            <person name="Sekido S."/>
            <person name="Kobayashi Y."/>
            <person name="Hashimoto A."/>
            <person name="Hamamoto M."/>
            <person name="Hiraoka Y."/>
            <person name="Horinouchi S."/>
            <person name="Yoshida M."/>
        </authorList>
    </citation>
    <scope>SUBCELLULAR LOCATION [LARGE SCALE ANALYSIS]</scope>
</reference>
<dbReference type="EMBL" id="CU329671">
    <property type="protein sequence ID" value="CAB91167.1"/>
    <property type="molecule type" value="Genomic_DNA"/>
</dbReference>
<dbReference type="SMR" id="Q9P6J5"/>
<dbReference type="FunCoup" id="Q9P6J5">
    <property type="interactions" value="66"/>
</dbReference>
<dbReference type="STRING" id="284812.Q9P6J5"/>
<dbReference type="iPTMnet" id="Q9P6J5"/>
<dbReference type="PaxDb" id="4896-SPBC1683.05.1"/>
<dbReference type="EnsemblFungi" id="SPBC1683.05.1">
    <property type="protein sequence ID" value="SPBC1683.05.1:pep"/>
    <property type="gene ID" value="SPBC1683.05"/>
</dbReference>
<dbReference type="KEGG" id="spo:2540166"/>
<dbReference type="PomBase" id="SPBC1683.05"/>
<dbReference type="VEuPathDB" id="FungiDB:SPBC1683.05"/>
<dbReference type="eggNOG" id="KOG2466">
    <property type="taxonomic scope" value="Eukaryota"/>
</dbReference>
<dbReference type="HOGENOM" id="CLU_021555_4_1_1"/>
<dbReference type="InParanoid" id="Q9P6J5"/>
<dbReference type="OMA" id="KIRWFFL"/>
<dbReference type="PhylomeDB" id="Q9P6J5"/>
<dbReference type="PRO" id="PR:Q9P6J5"/>
<dbReference type="Proteomes" id="UP000002485">
    <property type="component" value="Chromosome II"/>
</dbReference>
<dbReference type="GO" id="GO:0000139">
    <property type="term" value="C:Golgi membrane"/>
    <property type="evidence" value="ECO:0007669"/>
    <property type="project" value="UniProtKB-SubCell"/>
</dbReference>
<dbReference type="GO" id="GO:0005886">
    <property type="term" value="C:plasma membrane"/>
    <property type="evidence" value="ECO:0000318"/>
    <property type="project" value="GO_Central"/>
</dbReference>
<dbReference type="GO" id="GO:0015205">
    <property type="term" value="F:nucleobase transmembrane transporter activity"/>
    <property type="evidence" value="ECO:0000318"/>
    <property type="project" value="GO_Central"/>
</dbReference>
<dbReference type="GO" id="GO:0015837">
    <property type="term" value="P:amine transport"/>
    <property type="evidence" value="ECO:0000303"/>
    <property type="project" value="PomBase"/>
</dbReference>
<dbReference type="GO" id="GO:0015851">
    <property type="term" value="P:nucleobase transport"/>
    <property type="evidence" value="ECO:0000318"/>
    <property type="project" value="GO_Central"/>
</dbReference>
<dbReference type="CDD" id="cd11482">
    <property type="entry name" value="SLC-NCS1sbd_NRT1-like"/>
    <property type="match status" value="1"/>
</dbReference>
<dbReference type="Gene3D" id="1.10.4160.10">
    <property type="entry name" value="Hydantoin permease"/>
    <property type="match status" value="1"/>
</dbReference>
<dbReference type="InterPro" id="IPR001248">
    <property type="entry name" value="Pur-cyt_permease"/>
</dbReference>
<dbReference type="InterPro" id="IPR045225">
    <property type="entry name" value="Uracil/uridine/allantoin_perm"/>
</dbReference>
<dbReference type="PANTHER" id="PTHR30618">
    <property type="entry name" value="NCS1 FAMILY PURINE/PYRIMIDINE TRANSPORTER"/>
    <property type="match status" value="1"/>
</dbReference>
<dbReference type="PANTHER" id="PTHR30618:SF0">
    <property type="entry name" value="PURINE-URACIL PERMEASE NCS1"/>
    <property type="match status" value="1"/>
</dbReference>
<dbReference type="Pfam" id="PF02133">
    <property type="entry name" value="Transp_cyt_pur"/>
    <property type="match status" value="1"/>
</dbReference>
<gene>
    <name type="ORF">SPBC1683.05</name>
</gene>
<feature type="chain" id="PRO_0000317320" description="Uncharacterized permease C1683.05">
    <location>
        <begin position="1"/>
        <end position="559"/>
    </location>
</feature>
<feature type="transmembrane region" description="Helical" evidence="1">
    <location>
        <begin position="103"/>
        <end position="123"/>
    </location>
</feature>
<feature type="transmembrane region" description="Helical" evidence="1">
    <location>
        <begin position="139"/>
        <end position="159"/>
    </location>
</feature>
<feature type="transmembrane region" description="Helical" evidence="1">
    <location>
        <begin position="192"/>
        <end position="212"/>
    </location>
</feature>
<feature type="transmembrane region" description="Helical" evidence="1">
    <location>
        <begin position="223"/>
        <end position="243"/>
    </location>
</feature>
<feature type="transmembrane region" description="Helical" evidence="1">
    <location>
        <begin position="263"/>
        <end position="283"/>
    </location>
</feature>
<feature type="transmembrane region" description="Helical" evidence="1">
    <location>
        <begin position="302"/>
        <end position="322"/>
    </location>
</feature>
<feature type="transmembrane region" description="Helical" evidence="1">
    <location>
        <begin position="348"/>
        <end position="368"/>
    </location>
</feature>
<feature type="transmembrane region" description="Helical" evidence="1">
    <location>
        <begin position="387"/>
        <end position="407"/>
    </location>
</feature>
<feature type="transmembrane region" description="Helical" evidence="1">
    <location>
        <begin position="413"/>
        <end position="434"/>
    </location>
</feature>
<feature type="transmembrane region" description="Helical" evidence="1">
    <location>
        <begin position="466"/>
        <end position="486"/>
    </location>
</feature>
<feature type="transmembrane region" description="Helical" evidence="1">
    <location>
        <begin position="501"/>
        <end position="521"/>
    </location>
</feature>
<comment type="subcellular location">
    <subcellularLocation>
        <location evidence="2">Golgi apparatus membrane</location>
        <topology evidence="2">Multi-pass membrane protein</topology>
    </subcellularLocation>
</comment>
<comment type="similarity">
    <text evidence="3">Belongs to the purine-cytosine permease (2.A.39) family.</text>
</comment>